<protein>
    <recommendedName>
        <fullName evidence="1">Nucleoside diphosphate kinase</fullName>
        <shortName evidence="1">NDK</shortName>
        <shortName evidence="1">NDP kinase</shortName>
        <ecNumber evidence="1">2.7.4.6</ecNumber>
    </recommendedName>
    <alternativeName>
        <fullName evidence="1">Nucleoside-2-P kinase</fullName>
    </alternativeName>
</protein>
<keyword id="KW-0067">ATP-binding</keyword>
<keyword id="KW-0963">Cytoplasm</keyword>
<keyword id="KW-0418">Kinase</keyword>
<keyword id="KW-0460">Magnesium</keyword>
<keyword id="KW-0479">Metal-binding</keyword>
<keyword id="KW-0546">Nucleotide metabolism</keyword>
<keyword id="KW-0547">Nucleotide-binding</keyword>
<keyword id="KW-0597">Phosphoprotein</keyword>
<keyword id="KW-1185">Reference proteome</keyword>
<keyword id="KW-0808">Transferase</keyword>
<dbReference type="EC" id="2.7.4.6" evidence="1"/>
<dbReference type="EMBL" id="CP000453">
    <property type="protein sequence ID" value="ABI56597.1"/>
    <property type="molecule type" value="Genomic_DNA"/>
</dbReference>
<dbReference type="RefSeq" id="WP_011628992.1">
    <property type="nucleotide sequence ID" value="NC_008340.1"/>
</dbReference>
<dbReference type="SMR" id="Q0A990"/>
<dbReference type="KEGG" id="aeh:Mlg_1248"/>
<dbReference type="eggNOG" id="COG0105">
    <property type="taxonomic scope" value="Bacteria"/>
</dbReference>
<dbReference type="HOGENOM" id="CLU_060216_8_1_6"/>
<dbReference type="OrthoDB" id="9801161at2"/>
<dbReference type="Proteomes" id="UP000001962">
    <property type="component" value="Chromosome"/>
</dbReference>
<dbReference type="GO" id="GO:0005737">
    <property type="term" value="C:cytoplasm"/>
    <property type="evidence" value="ECO:0007669"/>
    <property type="project" value="UniProtKB-SubCell"/>
</dbReference>
<dbReference type="GO" id="GO:0005524">
    <property type="term" value="F:ATP binding"/>
    <property type="evidence" value="ECO:0007669"/>
    <property type="project" value="UniProtKB-UniRule"/>
</dbReference>
<dbReference type="GO" id="GO:0046872">
    <property type="term" value="F:metal ion binding"/>
    <property type="evidence" value="ECO:0007669"/>
    <property type="project" value="UniProtKB-KW"/>
</dbReference>
<dbReference type="GO" id="GO:0004550">
    <property type="term" value="F:nucleoside diphosphate kinase activity"/>
    <property type="evidence" value="ECO:0007669"/>
    <property type="project" value="UniProtKB-UniRule"/>
</dbReference>
<dbReference type="GO" id="GO:0006241">
    <property type="term" value="P:CTP biosynthetic process"/>
    <property type="evidence" value="ECO:0007669"/>
    <property type="project" value="UniProtKB-UniRule"/>
</dbReference>
<dbReference type="GO" id="GO:0006183">
    <property type="term" value="P:GTP biosynthetic process"/>
    <property type="evidence" value="ECO:0007669"/>
    <property type="project" value="UniProtKB-UniRule"/>
</dbReference>
<dbReference type="GO" id="GO:0006228">
    <property type="term" value="P:UTP biosynthetic process"/>
    <property type="evidence" value="ECO:0007669"/>
    <property type="project" value="UniProtKB-UniRule"/>
</dbReference>
<dbReference type="CDD" id="cd04413">
    <property type="entry name" value="NDPk_I"/>
    <property type="match status" value="1"/>
</dbReference>
<dbReference type="FunFam" id="3.30.70.141:FF:000001">
    <property type="entry name" value="Nucleoside diphosphate kinase"/>
    <property type="match status" value="1"/>
</dbReference>
<dbReference type="Gene3D" id="3.30.70.141">
    <property type="entry name" value="Nucleoside diphosphate kinase-like domain"/>
    <property type="match status" value="1"/>
</dbReference>
<dbReference type="HAMAP" id="MF_00451">
    <property type="entry name" value="NDP_kinase"/>
    <property type="match status" value="1"/>
</dbReference>
<dbReference type="InterPro" id="IPR034907">
    <property type="entry name" value="NDK-like_dom"/>
</dbReference>
<dbReference type="InterPro" id="IPR036850">
    <property type="entry name" value="NDK-like_dom_sf"/>
</dbReference>
<dbReference type="InterPro" id="IPR001564">
    <property type="entry name" value="Nucleoside_diP_kinase"/>
</dbReference>
<dbReference type="InterPro" id="IPR023005">
    <property type="entry name" value="Nucleoside_diP_kinase_AS"/>
</dbReference>
<dbReference type="NCBIfam" id="NF001908">
    <property type="entry name" value="PRK00668.1"/>
    <property type="match status" value="1"/>
</dbReference>
<dbReference type="PANTHER" id="PTHR11349">
    <property type="entry name" value="NUCLEOSIDE DIPHOSPHATE KINASE"/>
    <property type="match status" value="1"/>
</dbReference>
<dbReference type="Pfam" id="PF00334">
    <property type="entry name" value="NDK"/>
    <property type="match status" value="1"/>
</dbReference>
<dbReference type="PRINTS" id="PR01243">
    <property type="entry name" value="NUCDPKINASE"/>
</dbReference>
<dbReference type="SMART" id="SM00562">
    <property type="entry name" value="NDK"/>
    <property type="match status" value="1"/>
</dbReference>
<dbReference type="SUPFAM" id="SSF54919">
    <property type="entry name" value="Nucleoside diphosphate kinase, NDK"/>
    <property type="match status" value="1"/>
</dbReference>
<dbReference type="PROSITE" id="PS00469">
    <property type="entry name" value="NDPK"/>
    <property type="match status" value="1"/>
</dbReference>
<dbReference type="PROSITE" id="PS51374">
    <property type="entry name" value="NDPK_LIKE"/>
    <property type="match status" value="1"/>
</dbReference>
<accession>Q0A990</accession>
<feature type="chain" id="PRO_0000267768" description="Nucleoside diphosphate kinase">
    <location>
        <begin position="1"/>
        <end position="141"/>
    </location>
</feature>
<feature type="active site" description="Pros-phosphohistidine intermediate" evidence="1">
    <location>
        <position position="117"/>
    </location>
</feature>
<feature type="binding site" evidence="1">
    <location>
        <position position="11"/>
    </location>
    <ligand>
        <name>ATP</name>
        <dbReference type="ChEBI" id="CHEBI:30616"/>
    </ligand>
</feature>
<feature type="binding site" evidence="1">
    <location>
        <position position="59"/>
    </location>
    <ligand>
        <name>ATP</name>
        <dbReference type="ChEBI" id="CHEBI:30616"/>
    </ligand>
</feature>
<feature type="binding site" evidence="1">
    <location>
        <position position="87"/>
    </location>
    <ligand>
        <name>ATP</name>
        <dbReference type="ChEBI" id="CHEBI:30616"/>
    </ligand>
</feature>
<feature type="binding site" evidence="1">
    <location>
        <position position="93"/>
    </location>
    <ligand>
        <name>ATP</name>
        <dbReference type="ChEBI" id="CHEBI:30616"/>
    </ligand>
</feature>
<feature type="binding site" evidence="1">
    <location>
        <position position="104"/>
    </location>
    <ligand>
        <name>ATP</name>
        <dbReference type="ChEBI" id="CHEBI:30616"/>
    </ligand>
</feature>
<feature type="binding site" evidence="1">
    <location>
        <position position="114"/>
    </location>
    <ligand>
        <name>ATP</name>
        <dbReference type="ChEBI" id="CHEBI:30616"/>
    </ligand>
</feature>
<evidence type="ECO:0000255" key="1">
    <source>
        <dbReference type="HAMAP-Rule" id="MF_00451"/>
    </source>
</evidence>
<organism>
    <name type="scientific">Alkalilimnicola ehrlichii (strain ATCC BAA-1101 / DSM 17681 / MLHE-1)</name>
    <dbReference type="NCBI Taxonomy" id="187272"/>
    <lineage>
        <taxon>Bacteria</taxon>
        <taxon>Pseudomonadati</taxon>
        <taxon>Pseudomonadota</taxon>
        <taxon>Gammaproteobacteria</taxon>
        <taxon>Chromatiales</taxon>
        <taxon>Ectothiorhodospiraceae</taxon>
        <taxon>Alkalilimnicola</taxon>
    </lineage>
</organism>
<name>NDK_ALKEH</name>
<gene>
    <name evidence="1" type="primary">ndk</name>
    <name type="ordered locus">Mlg_1248</name>
</gene>
<sequence>MAVERTLSIIKPDAVAKNIIGEIYNRFEKAGLKIVAARMVHLSREQAEGFYAVHKERPFFNDLVGFMISGPVMVQVLEGENAIVKNREIMGATNPAEAAAGTLRHDYAETIDANAVHGSDAPETAKQEIEFFFKADELCSR</sequence>
<comment type="function">
    <text evidence="1">Major role in the synthesis of nucleoside triphosphates other than ATP. The ATP gamma phosphate is transferred to the NDP beta phosphate via a ping-pong mechanism, using a phosphorylated active-site intermediate.</text>
</comment>
<comment type="catalytic activity">
    <reaction evidence="1">
        <text>a 2'-deoxyribonucleoside 5'-diphosphate + ATP = a 2'-deoxyribonucleoside 5'-triphosphate + ADP</text>
        <dbReference type="Rhea" id="RHEA:44640"/>
        <dbReference type="ChEBI" id="CHEBI:30616"/>
        <dbReference type="ChEBI" id="CHEBI:61560"/>
        <dbReference type="ChEBI" id="CHEBI:73316"/>
        <dbReference type="ChEBI" id="CHEBI:456216"/>
        <dbReference type="EC" id="2.7.4.6"/>
    </reaction>
</comment>
<comment type="catalytic activity">
    <reaction evidence="1">
        <text>a ribonucleoside 5'-diphosphate + ATP = a ribonucleoside 5'-triphosphate + ADP</text>
        <dbReference type="Rhea" id="RHEA:18113"/>
        <dbReference type="ChEBI" id="CHEBI:30616"/>
        <dbReference type="ChEBI" id="CHEBI:57930"/>
        <dbReference type="ChEBI" id="CHEBI:61557"/>
        <dbReference type="ChEBI" id="CHEBI:456216"/>
        <dbReference type="EC" id="2.7.4.6"/>
    </reaction>
</comment>
<comment type="cofactor">
    <cofactor evidence="1">
        <name>Mg(2+)</name>
        <dbReference type="ChEBI" id="CHEBI:18420"/>
    </cofactor>
</comment>
<comment type="subunit">
    <text evidence="1">Homotetramer.</text>
</comment>
<comment type="subcellular location">
    <subcellularLocation>
        <location evidence="1">Cytoplasm</location>
    </subcellularLocation>
</comment>
<comment type="similarity">
    <text evidence="1">Belongs to the NDK family.</text>
</comment>
<proteinExistence type="inferred from homology"/>
<reference key="1">
    <citation type="submission" date="2006-08" db="EMBL/GenBank/DDBJ databases">
        <title>Complete sequence of Alkalilimnicola ehrilichei MLHE-1.</title>
        <authorList>
            <person name="Copeland A."/>
            <person name="Lucas S."/>
            <person name="Lapidus A."/>
            <person name="Barry K."/>
            <person name="Detter J.C."/>
            <person name="Glavina del Rio T."/>
            <person name="Hammon N."/>
            <person name="Israni S."/>
            <person name="Dalin E."/>
            <person name="Tice H."/>
            <person name="Pitluck S."/>
            <person name="Sims D."/>
            <person name="Brettin T."/>
            <person name="Bruce D."/>
            <person name="Han C."/>
            <person name="Tapia R."/>
            <person name="Gilna P."/>
            <person name="Schmutz J."/>
            <person name="Larimer F."/>
            <person name="Land M."/>
            <person name="Hauser L."/>
            <person name="Kyrpides N."/>
            <person name="Mikhailova N."/>
            <person name="Oremland R.S."/>
            <person name="Hoeft S.E."/>
            <person name="Switzer-Blum J."/>
            <person name="Kulp T."/>
            <person name="King G."/>
            <person name="Tabita R."/>
            <person name="Witte B."/>
            <person name="Santini J.M."/>
            <person name="Basu P."/>
            <person name="Hollibaugh J.T."/>
            <person name="Xie G."/>
            <person name="Stolz J.F."/>
            <person name="Richardson P."/>
        </authorList>
    </citation>
    <scope>NUCLEOTIDE SEQUENCE [LARGE SCALE GENOMIC DNA]</scope>
    <source>
        <strain>ATCC BAA-1101 / DSM 17681 / MLHE-1</strain>
    </source>
</reference>